<evidence type="ECO:0000250" key="1"/>
<evidence type="ECO:0000255" key="2">
    <source>
        <dbReference type="PROSITE-ProRule" id="PRU10013"/>
    </source>
</evidence>
<evidence type="ECO:0000305" key="3"/>
<reference key="1">
    <citation type="submission" date="1997-11" db="EMBL/GenBank/DDBJ databases">
        <authorList>
            <person name="Su H."/>
            <person name="Hardy K.A."/>
            <person name="Hermsmeier D."/>
            <person name="Baum T.J."/>
        </authorList>
    </citation>
    <scope>NUCLEOTIDE SEQUENCE [MRNA]</scope>
    <source>
        <strain>cv. Corsoy 79</strain>
    </source>
</reference>
<keyword id="KW-0330">Glyoxysome</keyword>
<keyword id="KW-0349">Heme</keyword>
<keyword id="KW-0376">Hydrogen peroxide</keyword>
<keyword id="KW-0408">Iron</keyword>
<keyword id="KW-0479">Metal-binding</keyword>
<keyword id="KW-0560">Oxidoreductase</keyword>
<keyword id="KW-0575">Peroxidase</keyword>
<keyword id="KW-0576">Peroxisome</keyword>
<keyword id="KW-1185">Reference proteome</keyword>
<dbReference type="EC" id="1.11.1.6"/>
<dbReference type="EMBL" id="AF035254">
    <property type="protein sequence ID" value="AAB88171.1"/>
    <property type="molecule type" value="mRNA"/>
</dbReference>
<dbReference type="RefSeq" id="NP_001235974.1">
    <property type="nucleotide sequence ID" value="NM_001249045.1"/>
</dbReference>
<dbReference type="SMR" id="O48560"/>
<dbReference type="FunCoup" id="O48560">
    <property type="interactions" value="2996"/>
</dbReference>
<dbReference type="STRING" id="3847.O48560"/>
<dbReference type="PeroxiBase" id="6261">
    <property type="entry name" value="GmKat03"/>
</dbReference>
<dbReference type="PaxDb" id="3847-GLYMA14G39810.1"/>
<dbReference type="EnsemblPlants" id="KRH17522">
    <property type="protein sequence ID" value="KRH17522"/>
    <property type="gene ID" value="GLYMA_14G223500"/>
</dbReference>
<dbReference type="GeneID" id="100037447"/>
<dbReference type="Gramene" id="KRH17522">
    <property type="protein sequence ID" value="KRH17522"/>
    <property type="gene ID" value="GLYMA_14G223500"/>
</dbReference>
<dbReference type="KEGG" id="gmx:100037447"/>
<dbReference type="eggNOG" id="KOG0047">
    <property type="taxonomic scope" value="Eukaryota"/>
</dbReference>
<dbReference type="HOGENOM" id="CLU_010645_2_0_1"/>
<dbReference type="InParanoid" id="O48560"/>
<dbReference type="OMA" id="FAPMIAK"/>
<dbReference type="OrthoDB" id="6880011at2759"/>
<dbReference type="Proteomes" id="UP000008827">
    <property type="component" value="Chromosome 14"/>
</dbReference>
<dbReference type="GO" id="GO:0005737">
    <property type="term" value="C:cytoplasm"/>
    <property type="evidence" value="ECO:0000318"/>
    <property type="project" value="GO_Central"/>
</dbReference>
<dbReference type="GO" id="GO:0009514">
    <property type="term" value="C:glyoxysome"/>
    <property type="evidence" value="ECO:0007669"/>
    <property type="project" value="UniProtKB-SubCell"/>
</dbReference>
<dbReference type="GO" id="GO:0005777">
    <property type="term" value="C:peroxisome"/>
    <property type="evidence" value="ECO:0000318"/>
    <property type="project" value="GO_Central"/>
</dbReference>
<dbReference type="GO" id="GO:0005886">
    <property type="term" value="C:plasma membrane"/>
    <property type="evidence" value="ECO:0000318"/>
    <property type="project" value="GO_Central"/>
</dbReference>
<dbReference type="GO" id="GO:0004096">
    <property type="term" value="F:catalase activity"/>
    <property type="evidence" value="ECO:0000318"/>
    <property type="project" value="GO_Central"/>
</dbReference>
<dbReference type="GO" id="GO:0020037">
    <property type="term" value="F:heme binding"/>
    <property type="evidence" value="ECO:0000318"/>
    <property type="project" value="GO_Central"/>
</dbReference>
<dbReference type="GO" id="GO:0046872">
    <property type="term" value="F:metal ion binding"/>
    <property type="evidence" value="ECO:0007669"/>
    <property type="project" value="UniProtKB-KW"/>
</dbReference>
<dbReference type="GO" id="GO:0042744">
    <property type="term" value="P:hydrogen peroxide catabolic process"/>
    <property type="evidence" value="ECO:0000318"/>
    <property type="project" value="GO_Central"/>
</dbReference>
<dbReference type="GO" id="GO:0042542">
    <property type="term" value="P:response to hydrogen peroxide"/>
    <property type="evidence" value="ECO:0000318"/>
    <property type="project" value="GO_Central"/>
</dbReference>
<dbReference type="CDD" id="cd08154">
    <property type="entry name" value="catalase_clade_1"/>
    <property type="match status" value="1"/>
</dbReference>
<dbReference type="FunFam" id="2.40.180.10:FF:000002">
    <property type="entry name" value="Catalase"/>
    <property type="match status" value="1"/>
</dbReference>
<dbReference type="Gene3D" id="2.40.180.10">
    <property type="entry name" value="Catalase core domain"/>
    <property type="match status" value="1"/>
</dbReference>
<dbReference type="InterPro" id="IPR018028">
    <property type="entry name" value="Catalase"/>
</dbReference>
<dbReference type="InterPro" id="IPR024708">
    <property type="entry name" value="Catalase_AS"/>
</dbReference>
<dbReference type="InterPro" id="IPR024711">
    <property type="entry name" value="Catalase_clade1/3"/>
</dbReference>
<dbReference type="InterPro" id="IPR011614">
    <property type="entry name" value="Catalase_core"/>
</dbReference>
<dbReference type="InterPro" id="IPR002226">
    <property type="entry name" value="Catalase_haem_BS"/>
</dbReference>
<dbReference type="InterPro" id="IPR010582">
    <property type="entry name" value="Catalase_immune_responsive"/>
</dbReference>
<dbReference type="InterPro" id="IPR020835">
    <property type="entry name" value="Catalase_sf"/>
</dbReference>
<dbReference type="PANTHER" id="PTHR11465">
    <property type="entry name" value="CATALASE"/>
    <property type="match status" value="1"/>
</dbReference>
<dbReference type="PANTHER" id="PTHR11465:SF23">
    <property type="entry name" value="CATALASE-2"/>
    <property type="match status" value="1"/>
</dbReference>
<dbReference type="Pfam" id="PF00199">
    <property type="entry name" value="Catalase"/>
    <property type="match status" value="1"/>
</dbReference>
<dbReference type="Pfam" id="PF06628">
    <property type="entry name" value="Catalase-rel"/>
    <property type="match status" value="1"/>
</dbReference>
<dbReference type="PIRSF" id="PIRSF038928">
    <property type="entry name" value="Catalase_clade1-3"/>
    <property type="match status" value="1"/>
</dbReference>
<dbReference type="PRINTS" id="PR00067">
    <property type="entry name" value="CATALASE"/>
</dbReference>
<dbReference type="SMART" id="SM01060">
    <property type="entry name" value="Catalase"/>
    <property type="match status" value="1"/>
</dbReference>
<dbReference type="SUPFAM" id="SSF56634">
    <property type="entry name" value="Heme-dependent catalase-like"/>
    <property type="match status" value="1"/>
</dbReference>
<dbReference type="PROSITE" id="PS00437">
    <property type="entry name" value="CATALASE_1"/>
    <property type="match status" value="1"/>
</dbReference>
<dbReference type="PROSITE" id="PS00438">
    <property type="entry name" value="CATALASE_2"/>
    <property type="match status" value="1"/>
</dbReference>
<dbReference type="PROSITE" id="PS51402">
    <property type="entry name" value="CATALASE_3"/>
    <property type="match status" value="1"/>
</dbReference>
<proteinExistence type="evidence at transcript level"/>
<organism>
    <name type="scientific">Glycine max</name>
    <name type="common">Soybean</name>
    <name type="synonym">Glycine hispida</name>
    <dbReference type="NCBI Taxonomy" id="3847"/>
    <lineage>
        <taxon>Eukaryota</taxon>
        <taxon>Viridiplantae</taxon>
        <taxon>Streptophyta</taxon>
        <taxon>Embryophyta</taxon>
        <taxon>Tracheophyta</taxon>
        <taxon>Spermatophyta</taxon>
        <taxon>Magnoliopsida</taxon>
        <taxon>eudicotyledons</taxon>
        <taxon>Gunneridae</taxon>
        <taxon>Pentapetalae</taxon>
        <taxon>rosids</taxon>
        <taxon>fabids</taxon>
        <taxon>Fabales</taxon>
        <taxon>Fabaceae</taxon>
        <taxon>Papilionoideae</taxon>
        <taxon>50 kb inversion clade</taxon>
        <taxon>NPAAA clade</taxon>
        <taxon>indigoferoid/millettioid clade</taxon>
        <taxon>Phaseoleae</taxon>
        <taxon>Glycine</taxon>
        <taxon>Glycine subgen. Soja</taxon>
    </lineage>
</organism>
<feature type="chain" id="PRO_0000084964" description="Catalase-3">
    <location>
        <begin position="1"/>
        <end position="492"/>
    </location>
</feature>
<feature type="active site" evidence="2">
    <location>
        <position position="65"/>
    </location>
</feature>
<feature type="active site" evidence="2">
    <location>
        <position position="138"/>
    </location>
</feature>
<feature type="binding site" description="axial binding residue" evidence="1">
    <location>
        <position position="348"/>
    </location>
    <ligand>
        <name>heme</name>
        <dbReference type="ChEBI" id="CHEBI:30413"/>
    </ligand>
    <ligandPart>
        <name>Fe</name>
        <dbReference type="ChEBI" id="CHEBI:18248"/>
    </ligandPart>
</feature>
<gene>
    <name type="primary">CAT3</name>
</gene>
<comment type="function">
    <text>Occurs in almost all aerobically respiring organisms and serves to protect cells from the toxic effects of hydrogen peroxide.</text>
</comment>
<comment type="catalytic activity">
    <reaction evidence="2">
        <text>2 H2O2 = O2 + 2 H2O</text>
        <dbReference type="Rhea" id="RHEA:20309"/>
        <dbReference type="ChEBI" id="CHEBI:15377"/>
        <dbReference type="ChEBI" id="CHEBI:15379"/>
        <dbReference type="ChEBI" id="CHEBI:16240"/>
        <dbReference type="EC" id="1.11.1.6"/>
    </reaction>
</comment>
<comment type="cofactor">
    <cofactor>
        <name>heme</name>
        <dbReference type="ChEBI" id="CHEBI:30413"/>
    </cofactor>
</comment>
<comment type="subunit">
    <text evidence="1">Homotetramer.</text>
</comment>
<comment type="subcellular location">
    <subcellularLocation>
        <location evidence="1">Peroxisome</location>
    </subcellularLocation>
    <subcellularLocation>
        <location evidence="1">Glyoxysome</location>
    </subcellularLocation>
</comment>
<comment type="similarity">
    <text evidence="3">Belongs to the catalase family.</text>
</comment>
<accession>O48560</accession>
<name>CATA3_SOYBN</name>
<sequence>MDPYKNRPSSAFNSPFWTTNSGAPIWNNNSSLTVGSRGPILLEDYHLVEKLANFDRERIPERVVHARGASAKGFFEVTHDISHLTCADFLRAPGVQTPLIVRFSTVIHERGSPETLRDPRGFAVKFYTREGNFDLVGNNFPVFFVRDGLKFPDMVHALKPNPKSHIQENWRILDFFSHHPESLHMFSFLFDDVGIPQDYRHMDGFGVNTYTLINKAGKAVYVKFHWKTTCGEKCLLDDEAIRVGGSNHSHATQDLYDSIAAGNYPEWKLYIQTLDPENEDRLDFDPLDVTKTWPEDVLPLQPVGRMVLNKNIDNFFAENEQLAFCPAIIVPGVYYSDDKLLQTRIFSYADTQRHRLGPNYLQLPANSPKCAHHNNHHDGFMNFMHRDEEVNYFPSRYDPVRHAERVPVPPRTLGGKREKCMIEKENNFKQPGERYRSWPSDRQERFVRRWVDALSDPRVTHEIRSIWISYWSQADRSLGQKIASHLNLKPSI</sequence>
<protein>
    <recommendedName>
        <fullName>Catalase-3</fullName>
        <ecNumber>1.11.1.6</ecNumber>
    </recommendedName>
</protein>